<dbReference type="EMBL" id="U03282">
    <property type="protein sequence ID" value="AAC34307.1"/>
    <property type="molecule type" value="mRNA"/>
</dbReference>
<dbReference type="EMBL" id="AE013599">
    <property type="protein sequence ID" value="AAF46724.2"/>
    <property type="molecule type" value="Genomic_DNA"/>
</dbReference>
<dbReference type="EMBL" id="AE013599">
    <property type="protein sequence ID" value="AAM70897.1"/>
    <property type="molecule type" value="Genomic_DNA"/>
</dbReference>
<dbReference type="EMBL" id="AY069377">
    <property type="protein sequence ID" value="AAL39522.1"/>
    <property type="molecule type" value="mRNA"/>
</dbReference>
<dbReference type="EMBL" id="AY089610">
    <property type="protein sequence ID" value="AAL90348.1"/>
    <property type="molecule type" value="mRNA"/>
</dbReference>
<dbReference type="PIR" id="A54949">
    <property type="entry name" value="A54949"/>
</dbReference>
<dbReference type="RefSeq" id="NP_476965.1">
    <molecule id="P49415-1"/>
    <property type="nucleotide sequence ID" value="NM_057617.5"/>
</dbReference>
<dbReference type="RefSeq" id="NP_726071.1">
    <molecule id="P49415-2"/>
    <property type="nucleotide sequence ID" value="NM_166449.5"/>
</dbReference>
<dbReference type="BioGRID" id="63077">
    <property type="interactions" value="51"/>
</dbReference>
<dbReference type="FunCoup" id="P49415">
    <property type="interactions" value="25"/>
</dbReference>
<dbReference type="IntAct" id="P49415">
    <property type="interactions" value="62"/>
</dbReference>
<dbReference type="STRING" id="7227.FBpp0309695"/>
<dbReference type="GlyCosmos" id="P49415">
    <property type="glycosylation" value="6 sites, No reported glycans"/>
</dbReference>
<dbReference type="GlyGen" id="P49415">
    <property type="glycosylation" value="6 sites"/>
</dbReference>
<dbReference type="DNASU" id="37447"/>
<dbReference type="EnsemblMetazoa" id="FBtr0071706">
    <molecule id="P49415-1"/>
    <property type="protein sequence ID" value="FBpp0071623"/>
    <property type="gene ID" value="FBgn0010415"/>
</dbReference>
<dbReference type="EnsemblMetazoa" id="FBtr0071707">
    <molecule id="P49415-2"/>
    <property type="protein sequence ID" value="FBpp0071624"/>
    <property type="gene ID" value="FBgn0010415"/>
</dbReference>
<dbReference type="GeneID" id="37447"/>
<dbReference type="KEGG" id="dme:Dmel_CG10497"/>
<dbReference type="UCSC" id="CG10497-RA">
    <molecule id="P49415-1"/>
    <property type="organism name" value="d. melanogaster"/>
</dbReference>
<dbReference type="AGR" id="FB:FBgn0010415"/>
<dbReference type="CTD" id="37447"/>
<dbReference type="FlyBase" id="FBgn0010415">
    <property type="gene designation" value="Sdc"/>
</dbReference>
<dbReference type="VEuPathDB" id="VectorBase:FBgn0010415"/>
<dbReference type="eggNOG" id="ENOG502S3JC">
    <property type="taxonomic scope" value="Eukaryota"/>
</dbReference>
<dbReference type="GeneTree" id="ENSGT00940000168670"/>
<dbReference type="InParanoid" id="P49415"/>
<dbReference type="OrthoDB" id="10044468at2759"/>
<dbReference type="PhylomeDB" id="P49415"/>
<dbReference type="Reactome" id="R-DME-1971475">
    <property type="pathway name" value="A tetrasaccharide linker sequence is required for GAG synthesis"/>
</dbReference>
<dbReference type="Reactome" id="R-DME-2022928">
    <property type="pathway name" value="HS-GAG biosynthesis"/>
</dbReference>
<dbReference type="Reactome" id="R-DME-2024096">
    <property type="pathway name" value="HS-GAG degradation"/>
</dbReference>
<dbReference type="Reactome" id="R-DME-3000170">
    <property type="pathway name" value="Syndecan interactions"/>
</dbReference>
<dbReference type="Reactome" id="R-DME-381426">
    <property type="pathway name" value="Regulation of Insulin-like Growth Factor (IGF) transport and uptake by Insulin-like Growth Factor Binding Proteins (IGFBPs)"/>
</dbReference>
<dbReference type="Reactome" id="R-DME-3928662">
    <property type="pathway name" value="EPHB-mediated forward signaling"/>
</dbReference>
<dbReference type="Reactome" id="R-DME-8957275">
    <property type="pathway name" value="Post-translational protein phosphorylation"/>
</dbReference>
<dbReference type="BioGRID-ORCS" id="37447">
    <property type="hits" value="1 hit in 3 CRISPR screens"/>
</dbReference>
<dbReference type="ChiTaRS" id="Sdc">
    <property type="organism name" value="fly"/>
</dbReference>
<dbReference type="GenomeRNAi" id="37447"/>
<dbReference type="PRO" id="PR:P49415"/>
<dbReference type="Proteomes" id="UP000000803">
    <property type="component" value="Chromosome 2R"/>
</dbReference>
<dbReference type="Bgee" id="FBgn0010415">
    <property type="expression patterns" value="Expressed in nurse follicle cell (Drosophila) in ovary and 345 other cell types or tissues"/>
</dbReference>
<dbReference type="ExpressionAtlas" id="P49415">
    <property type="expression patterns" value="baseline and differential"/>
</dbReference>
<dbReference type="GO" id="GO:0030424">
    <property type="term" value="C:axon"/>
    <property type="evidence" value="ECO:0000314"/>
    <property type="project" value="FlyBase"/>
</dbReference>
<dbReference type="GO" id="GO:0009986">
    <property type="term" value="C:cell surface"/>
    <property type="evidence" value="ECO:0000318"/>
    <property type="project" value="GO_Central"/>
</dbReference>
<dbReference type="GO" id="GO:0016020">
    <property type="term" value="C:membrane"/>
    <property type="evidence" value="ECO:0007669"/>
    <property type="project" value="UniProtKB-SubCell"/>
</dbReference>
<dbReference type="GO" id="GO:0031594">
    <property type="term" value="C:neuromuscular junction"/>
    <property type="evidence" value="ECO:0000314"/>
    <property type="project" value="FlyBase"/>
</dbReference>
<dbReference type="GO" id="GO:0098595">
    <property type="term" value="C:perivitelline space"/>
    <property type="evidence" value="ECO:0007005"/>
    <property type="project" value="FlyBase"/>
</dbReference>
<dbReference type="GO" id="GO:0045202">
    <property type="term" value="C:synapse"/>
    <property type="evidence" value="ECO:0000314"/>
    <property type="project" value="FlyBase"/>
</dbReference>
<dbReference type="GO" id="GO:0007411">
    <property type="term" value="P:axon guidance"/>
    <property type="evidence" value="ECO:0000315"/>
    <property type="project" value="FlyBase"/>
</dbReference>
<dbReference type="GO" id="GO:0016477">
    <property type="term" value="P:cell migration"/>
    <property type="evidence" value="ECO:0000318"/>
    <property type="project" value="GO_Central"/>
</dbReference>
<dbReference type="GO" id="GO:0007427">
    <property type="term" value="P:epithelial cell migration, open tracheal system"/>
    <property type="evidence" value="ECO:0000315"/>
    <property type="project" value="FlyBase"/>
</dbReference>
<dbReference type="GO" id="GO:0021782">
    <property type="term" value="P:glial cell development"/>
    <property type="evidence" value="ECO:0000315"/>
    <property type="project" value="FlyBase"/>
</dbReference>
<dbReference type="GO" id="GO:0008045">
    <property type="term" value="P:motor neuron axon guidance"/>
    <property type="evidence" value="ECO:0000315"/>
    <property type="project" value="FlyBase"/>
</dbReference>
<dbReference type="GO" id="GO:0007517">
    <property type="term" value="P:muscle organ development"/>
    <property type="evidence" value="ECO:0007669"/>
    <property type="project" value="UniProtKB-KW"/>
</dbReference>
<dbReference type="GO" id="GO:0045887">
    <property type="term" value="P:positive regulation of synaptic assembly at neuromuscular junction"/>
    <property type="evidence" value="ECO:0000315"/>
    <property type="project" value="FlyBase"/>
</dbReference>
<dbReference type="InterPro" id="IPR003585">
    <property type="entry name" value="Neurexin-like"/>
</dbReference>
<dbReference type="InterPro" id="IPR001050">
    <property type="entry name" value="Syndecan"/>
</dbReference>
<dbReference type="InterPro" id="IPR027789">
    <property type="entry name" value="Syndecan/Neurexin_dom"/>
</dbReference>
<dbReference type="InterPro" id="IPR030479">
    <property type="entry name" value="Syndecan_CS"/>
</dbReference>
<dbReference type="PANTHER" id="PTHR10915">
    <property type="entry name" value="SYNDECAN"/>
    <property type="match status" value="1"/>
</dbReference>
<dbReference type="PANTHER" id="PTHR10915:SF1">
    <property type="entry name" value="SYNDECAN"/>
    <property type="match status" value="1"/>
</dbReference>
<dbReference type="Pfam" id="PF01034">
    <property type="entry name" value="Syndecan"/>
    <property type="match status" value="1"/>
</dbReference>
<dbReference type="SMART" id="SM00294">
    <property type="entry name" value="4.1m"/>
    <property type="match status" value="1"/>
</dbReference>
<dbReference type="PROSITE" id="PS00964">
    <property type="entry name" value="SYNDECAN"/>
    <property type="match status" value="1"/>
</dbReference>
<reference key="1">
    <citation type="journal article" date="1994" name="Proc. Natl. Acad. Sci. U.S.A.">
        <title>Drosophila syndecan: conservation of a cell-surface heparan sulfate proteoglycan.</title>
        <authorList>
            <person name="Spring J."/>
            <person name="Paine-Saunders S.E."/>
            <person name="Hynes R.O."/>
            <person name="Bernfield M."/>
        </authorList>
    </citation>
    <scope>NUCLEOTIDE SEQUENCE [MRNA] (ISOFORM A)</scope>
    <scope>FUNCTION</scope>
    <scope>TISSUE SPECIFICITY</scope>
</reference>
<reference key="2">
    <citation type="journal article" date="2004" name="Curr. Biol.">
        <title>Heparan sulfate proteoglycan syndecan promotes axonal and myotube guidance by slit/robo signaling.</title>
        <authorList>
            <person name="Steigemann P."/>
            <person name="Molitor A."/>
            <person name="Fellert S."/>
            <person name="Jackle H."/>
            <person name="Vorbruggen G."/>
        </authorList>
    </citation>
    <scope>NUCLEOTIDE SEQUENCE [MRNA] (ISOFORMS A AND B)</scope>
    <scope>FUNCTION</scope>
    <scope>TISSUE SPECIFICITY</scope>
    <scope>DISRUPTION PHENOTYPE</scope>
</reference>
<reference key="3">
    <citation type="journal article" date="2000" name="Science">
        <title>The genome sequence of Drosophila melanogaster.</title>
        <authorList>
            <person name="Adams M.D."/>
            <person name="Celniker S.E."/>
            <person name="Holt R.A."/>
            <person name="Evans C.A."/>
            <person name="Gocayne J.D."/>
            <person name="Amanatides P.G."/>
            <person name="Scherer S.E."/>
            <person name="Li P.W."/>
            <person name="Hoskins R.A."/>
            <person name="Galle R.F."/>
            <person name="George R.A."/>
            <person name="Lewis S.E."/>
            <person name="Richards S."/>
            <person name="Ashburner M."/>
            <person name="Henderson S.N."/>
            <person name="Sutton G.G."/>
            <person name="Wortman J.R."/>
            <person name="Yandell M.D."/>
            <person name="Zhang Q."/>
            <person name="Chen L.X."/>
            <person name="Brandon R.C."/>
            <person name="Rogers Y.-H.C."/>
            <person name="Blazej R.G."/>
            <person name="Champe M."/>
            <person name="Pfeiffer B.D."/>
            <person name="Wan K.H."/>
            <person name="Doyle C."/>
            <person name="Baxter E.G."/>
            <person name="Helt G."/>
            <person name="Nelson C.R."/>
            <person name="Miklos G.L.G."/>
            <person name="Abril J.F."/>
            <person name="Agbayani A."/>
            <person name="An H.-J."/>
            <person name="Andrews-Pfannkoch C."/>
            <person name="Baldwin D."/>
            <person name="Ballew R.M."/>
            <person name="Basu A."/>
            <person name="Baxendale J."/>
            <person name="Bayraktaroglu L."/>
            <person name="Beasley E.M."/>
            <person name="Beeson K.Y."/>
            <person name="Benos P.V."/>
            <person name="Berman B.P."/>
            <person name="Bhandari D."/>
            <person name="Bolshakov S."/>
            <person name="Borkova D."/>
            <person name="Botchan M.R."/>
            <person name="Bouck J."/>
            <person name="Brokstein P."/>
            <person name="Brottier P."/>
            <person name="Burtis K.C."/>
            <person name="Busam D.A."/>
            <person name="Butler H."/>
            <person name="Cadieu E."/>
            <person name="Center A."/>
            <person name="Chandra I."/>
            <person name="Cherry J.M."/>
            <person name="Cawley S."/>
            <person name="Dahlke C."/>
            <person name="Davenport L.B."/>
            <person name="Davies P."/>
            <person name="de Pablos B."/>
            <person name="Delcher A."/>
            <person name="Deng Z."/>
            <person name="Mays A.D."/>
            <person name="Dew I."/>
            <person name="Dietz S.M."/>
            <person name="Dodson K."/>
            <person name="Doup L.E."/>
            <person name="Downes M."/>
            <person name="Dugan-Rocha S."/>
            <person name="Dunkov B.C."/>
            <person name="Dunn P."/>
            <person name="Durbin K.J."/>
            <person name="Evangelista C.C."/>
            <person name="Ferraz C."/>
            <person name="Ferriera S."/>
            <person name="Fleischmann W."/>
            <person name="Fosler C."/>
            <person name="Gabrielian A.E."/>
            <person name="Garg N.S."/>
            <person name="Gelbart W.M."/>
            <person name="Glasser K."/>
            <person name="Glodek A."/>
            <person name="Gong F."/>
            <person name="Gorrell J.H."/>
            <person name="Gu Z."/>
            <person name="Guan P."/>
            <person name="Harris M."/>
            <person name="Harris N.L."/>
            <person name="Harvey D.A."/>
            <person name="Heiman T.J."/>
            <person name="Hernandez J.R."/>
            <person name="Houck J."/>
            <person name="Hostin D."/>
            <person name="Houston K.A."/>
            <person name="Howland T.J."/>
            <person name="Wei M.-H."/>
            <person name="Ibegwam C."/>
            <person name="Jalali M."/>
            <person name="Kalush F."/>
            <person name="Karpen G.H."/>
            <person name="Ke Z."/>
            <person name="Kennison J.A."/>
            <person name="Ketchum K.A."/>
            <person name="Kimmel B.E."/>
            <person name="Kodira C.D."/>
            <person name="Kraft C.L."/>
            <person name="Kravitz S."/>
            <person name="Kulp D."/>
            <person name="Lai Z."/>
            <person name="Lasko P."/>
            <person name="Lei Y."/>
            <person name="Levitsky A.A."/>
            <person name="Li J.H."/>
            <person name="Li Z."/>
            <person name="Liang Y."/>
            <person name="Lin X."/>
            <person name="Liu X."/>
            <person name="Mattei B."/>
            <person name="McIntosh T.C."/>
            <person name="McLeod M.P."/>
            <person name="McPherson D."/>
            <person name="Merkulov G."/>
            <person name="Milshina N.V."/>
            <person name="Mobarry C."/>
            <person name="Morris J."/>
            <person name="Moshrefi A."/>
            <person name="Mount S.M."/>
            <person name="Moy M."/>
            <person name="Murphy B."/>
            <person name="Murphy L."/>
            <person name="Muzny D.M."/>
            <person name="Nelson D.L."/>
            <person name="Nelson D.R."/>
            <person name="Nelson K.A."/>
            <person name="Nixon K."/>
            <person name="Nusskern D.R."/>
            <person name="Pacleb J.M."/>
            <person name="Palazzolo M."/>
            <person name="Pittman G.S."/>
            <person name="Pan S."/>
            <person name="Pollard J."/>
            <person name="Puri V."/>
            <person name="Reese M.G."/>
            <person name="Reinert K."/>
            <person name="Remington K."/>
            <person name="Saunders R.D.C."/>
            <person name="Scheeler F."/>
            <person name="Shen H."/>
            <person name="Shue B.C."/>
            <person name="Siden-Kiamos I."/>
            <person name="Simpson M."/>
            <person name="Skupski M.P."/>
            <person name="Smith T.J."/>
            <person name="Spier E."/>
            <person name="Spradling A.C."/>
            <person name="Stapleton M."/>
            <person name="Strong R."/>
            <person name="Sun E."/>
            <person name="Svirskas R."/>
            <person name="Tector C."/>
            <person name="Turner R."/>
            <person name="Venter E."/>
            <person name="Wang A.H."/>
            <person name="Wang X."/>
            <person name="Wang Z.-Y."/>
            <person name="Wassarman D.A."/>
            <person name="Weinstock G.M."/>
            <person name="Weissenbach J."/>
            <person name="Williams S.M."/>
            <person name="Woodage T."/>
            <person name="Worley K.C."/>
            <person name="Wu D."/>
            <person name="Yang S."/>
            <person name="Yao Q.A."/>
            <person name="Ye J."/>
            <person name="Yeh R.-F."/>
            <person name="Zaveri J.S."/>
            <person name="Zhan M."/>
            <person name="Zhang G."/>
            <person name="Zhao Q."/>
            <person name="Zheng L."/>
            <person name="Zheng X.H."/>
            <person name="Zhong F.N."/>
            <person name="Zhong W."/>
            <person name="Zhou X."/>
            <person name="Zhu S.C."/>
            <person name="Zhu X."/>
            <person name="Smith H.O."/>
            <person name="Gibbs R.A."/>
            <person name="Myers E.W."/>
            <person name="Rubin G.M."/>
            <person name="Venter J.C."/>
        </authorList>
    </citation>
    <scope>NUCLEOTIDE SEQUENCE [LARGE SCALE GENOMIC DNA]</scope>
    <source>
        <strain>Berkeley</strain>
    </source>
</reference>
<reference key="4">
    <citation type="journal article" date="2002" name="Genome Biol.">
        <title>Annotation of the Drosophila melanogaster euchromatic genome: a systematic review.</title>
        <authorList>
            <person name="Misra S."/>
            <person name="Crosby M.A."/>
            <person name="Mungall C.J."/>
            <person name="Matthews B.B."/>
            <person name="Campbell K.S."/>
            <person name="Hradecky P."/>
            <person name="Huang Y."/>
            <person name="Kaminker J.S."/>
            <person name="Millburn G.H."/>
            <person name="Prochnik S.E."/>
            <person name="Smith C.D."/>
            <person name="Tupy J.L."/>
            <person name="Whitfield E.J."/>
            <person name="Bayraktaroglu L."/>
            <person name="Berman B.P."/>
            <person name="Bettencourt B.R."/>
            <person name="Celniker S.E."/>
            <person name="de Grey A.D.N.J."/>
            <person name="Drysdale R.A."/>
            <person name="Harris N.L."/>
            <person name="Richter J."/>
            <person name="Russo S."/>
            <person name="Schroeder A.J."/>
            <person name="Shu S.Q."/>
            <person name="Stapleton M."/>
            <person name="Yamada C."/>
            <person name="Ashburner M."/>
            <person name="Gelbart W.M."/>
            <person name="Rubin G.M."/>
            <person name="Lewis S.E."/>
        </authorList>
    </citation>
    <scope>GENOME REANNOTATION</scope>
    <scope>ALTERNATIVE SPLICING</scope>
    <source>
        <strain>Berkeley</strain>
    </source>
</reference>
<reference key="5">
    <citation type="journal article" date="2002" name="Genome Biol.">
        <title>A Drosophila full-length cDNA resource.</title>
        <authorList>
            <person name="Stapleton M."/>
            <person name="Carlson J.W."/>
            <person name="Brokstein P."/>
            <person name="Yu C."/>
            <person name="Champe M."/>
            <person name="George R.A."/>
            <person name="Guarin H."/>
            <person name="Kronmiller B."/>
            <person name="Pacleb J.M."/>
            <person name="Park S."/>
            <person name="Wan K.H."/>
            <person name="Rubin G.M."/>
            <person name="Celniker S.E."/>
        </authorList>
    </citation>
    <scope>NUCLEOTIDE SEQUENCE [LARGE SCALE MRNA] (ISOFORMS A AND B)</scope>
    <source>
        <strain>Berkeley</strain>
        <tissue>Embryo</tissue>
    </source>
</reference>
<proteinExistence type="evidence at transcript level"/>
<evidence type="ECO:0000255" key="1"/>
<evidence type="ECO:0000256" key="2">
    <source>
        <dbReference type="SAM" id="MobiDB-lite"/>
    </source>
</evidence>
<evidence type="ECO:0000269" key="3">
    <source>
    </source>
</evidence>
<evidence type="ECO:0000269" key="4">
    <source>
    </source>
</evidence>
<evidence type="ECO:0000303" key="5">
    <source>
    </source>
</evidence>
<evidence type="ECO:0000303" key="6">
    <source>
    </source>
</evidence>
<evidence type="ECO:0000305" key="7"/>
<comment type="function">
    <text evidence="3 4">Cell surface proteoglycan that bears heparan sulfate. Required for axonal and myotube guidance, is a necessary component of slit/robo signaling and is required in the slit target cells.</text>
</comment>
<comment type="subcellular location">
    <subcellularLocation>
        <location>Membrane</location>
        <topology>Single-pass type I membrane protein</topology>
    </subcellularLocation>
</comment>
<comment type="alternative products">
    <event type="alternative splicing"/>
    <isoform>
        <id>P49415-1</id>
        <name>A</name>
        <sequence type="displayed"/>
    </isoform>
    <isoform>
        <id>P49415-2</id>
        <name>B</name>
        <name>C</name>
        <sequence type="described" ref="VSP_011792"/>
    </isoform>
</comment>
<comment type="tissue specificity">
    <text evidence="3 4">In 13-16 hours embryos, expressed in lymph glands, peripheral and central nervous system and basal surfaces of gut epithelia. Sdc and robo are coexpressed in domains adjacent to slit; in tracheal pits and midline glia cells.</text>
</comment>
<comment type="disruption phenotype">
    <text evidence="3">Flies exhibit aberrant midline guidance of axons and establishment of muscle pattern.</text>
</comment>
<comment type="similarity">
    <text evidence="7">Belongs to the syndecan proteoglycan family.</text>
</comment>
<organism>
    <name type="scientific">Drosophila melanogaster</name>
    <name type="common">Fruit fly</name>
    <dbReference type="NCBI Taxonomy" id="7227"/>
    <lineage>
        <taxon>Eukaryota</taxon>
        <taxon>Metazoa</taxon>
        <taxon>Ecdysozoa</taxon>
        <taxon>Arthropoda</taxon>
        <taxon>Hexapoda</taxon>
        <taxon>Insecta</taxon>
        <taxon>Pterygota</taxon>
        <taxon>Neoptera</taxon>
        <taxon>Endopterygota</taxon>
        <taxon>Diptera</taxon>
        <taxon>Brachycera</taxon>
        <taxon>Muscomorpha</taxon>
        <taxon>Ephydroidea</taxon>
        <taxon>Drosophilidae</taxon>
        <taxon>Drosophila</taxon>
        <taxon>Sophophora</taxon>
    </lineage>
</organism>
<name>SDC_DROME</name>
<gene>
    <name type="primary">Sdc</name>
    <name type="synonym">Syd</name>
    <name type="ORF">CG10497</name>
</gene>
<protein>
    <recommendedName>
        <fullName>Syndecan</fullName>
    </recommendedName>
</protein>
<accession>P49415</accession>
<accession>Q0E8Z8</accession>
<accession>Q8SXJ0</accession>
<accession>Q9W2G7</accession>
<feature type="signal peptide" evidence="1">
    <location>
        <begin position="1"/>
        <end position="28"/>
    </location>
</feature>
<feature type="chain" id="PRO_0000033515" description="Syndecan">
    <location>
        <begin position="29"/>
        <end position="399"/>
    </location>
</feature>
<feature type="topological domain" description="Extracellular" evidence="1">
    <location>
        <begin position="29"/>
        <end position="340"/>
    </location>
</feature>
<feature type="transmembrane region" description="Helical" evidence="1">
    <location>
        <begin position="341"/>
        <end position="365"/>
    </location>
</feature>
<feature type="topological domain" description="Cytoplasmic" evidence="1">
    <location>
        <begin position="366"/>
        <end position="399"/>
    </location>
</feature>
<feature type="region of interest" description="Disordered" evidence="2">
    <location>
        <begin position="28"/>
        <end position="319"/>
    </location>
</feature>
<feature type="region of interest" description="Disordered" evidence="2">
    <location>
        <begin position="373"/>
        <end position="399"/>
    </location>
</feature>
<feature type="compositionally biased region" description="Low complexity" evidence="2">
    <location>
        <begin position="36"/>
        <end position="46"/>
    </location>
</feature>
<feature type="compositionally biased region" description="Basic and acidic residues" evidence="2">
    <location>
        <begin position="67"/>
        <end position="77"/>
    </location>
</feature>
<feature type="compositionally biased region" description="Polar residues" evidence="2">
    <location>
        <begin position="99"/>
        <end position="116"/>
    </location>
</feature>
<feature type="compositionally biased region" description="Low complexity" evidence="2">
    <location>
        <begin position="117"/>
        <end position="172"/>
    </location>
</feature>
<feature type="compositionally biased region" description="Acidic residues" evidence="2">
    <location>
        <begin position="191"/>
        <end position="214"/>
    </location>
</feature>
<feature type="compositionally biased region" description="Basic and acidic residues" evidence="2">
    <location>
        <begin position="215"/>
        <end position="226"/>
    </location>
</feature>
<feature type="compositionally biased region" description="Acidic residues" evidence="2">
    <location>
        <begin position="253"/>
        <end position="270"/>
    </location>
</feature>
<feature type="compositionally biased region" description="Polar residues" evidence="2">
    <location>
        <begin position="299"/>
        <end position="309"/>
    </location>
</feature>
<feature type="compositionally biased region" description="Polar residues" evidence="2">
    <location>
        <begin position="383"/>
        <end position="399"/>
    </location>
</feature>
<feature type="glycosylation site" description="O-linked (Xyl...) (glycosaminoglycan) serine" evidence="1">
    <location>
        <position position="62"/>
    </location>
</feature>
<feature type="glycosylation site" description="O-linked (Xyl...) (glycosaminoglycan) serine" evidence="1">
    <location>
        <position position="79"/>
    </location>
</feature>
<feature type="glycosylation site" description="O-linked (Xyl...) (glycosaminoglycan) serine" evidence="1">
    <location>
        <position position="81"/>
    </location>
</feature>
<feature type="glycosylation site" description="O-linked (Xyl...) (glycosaminoglycan) serine" evidence="1">
    <location>
        <position position="110"/>
    </location>
</feature>
<feature type="glycosylation site" description="N-linked (GlcNAc...) asparagine" evidence="1">
    <location>
        <position position="160"/>
    </location>
</feature>
<feature type="glycosylation site" description="O-linked (Xyl...) (glycosaminoglycan) serine" evidence="1">
    <location>
        <position position="194"/>
    </location>
</feature>
<feature type="splice variant" id="VSP_011792" description="In isoform B." evidence="5 6">
    <location>
        <begin position="115"/>
        <end position="287"/>
    </location>
</feature>
<feature type="sequence conflict" description="In Ref. 1; AAC34307." evidence="7" ref="1">
    <original>APS</original>
    <variation>RHP</variation>
    <location>
        <begin position="40"/>
        <end position="42"/>
    </location>
</feature>
<feature type="sequence conflict" description="In Ref. 1; AAC34307." evidence="7" ref="1">
    <location>
        <begin position="137"/>
        <end position="141"/>
    </location>
</feature>
<feature type="sequence conflict" description="In Ref. 1; AAC34307." evidence="7" ref="1">
    <original>T</original>
    <variation>TT</variation>
    <location>
        <position position="168"/>
    </location>
</feature>
<sequence length="399" mass="42088">MKPKQKISVEPLLLVAILIGVLVAATHAQDQKSVKPSAAAPSAAASRPHDEIYIDDDSIEGSGGRGGIHEDLEKDPDYSGSGFGPDDEDAEPDQHSHSSHNTRISQSSNSGINTAHTPTQTSSTIPTTSTSTPMPTTTPTATTPASTTTAAATQISSFANSSSTTTTTLAPTIPAEPQQPLFPPFDKDLDTESSGDGIDADAEDDDEDDGDDKDYDYNKELDKEIDIDGPEPGHLPPVVHHNTVETGHIPTTDEIDVDGGDEDDNGDSDIDGPRIGGNDGDITERGPGAGGSNVHELDPNTNVNSQPSDTKGIDHRPNGNEVVIMSEDDRTSSFFSQPGILAAVIGGAVVGLLCAILVVMFIVYRMRKKDEGSYALDEPKRSPANNSYAKNANNREFYA</sequence>
<keyword id="KW-0025">Alternative splicing</keyword>
<keyword id="KW-0217">Developmental protein</keyword>
<keyword id="KW-0221">Differentiation</keyword>
<keyword id="KW-0325">Glycoprotein</keyword>
<keyword id="KW-0357">Heparan sulfate</keyword>
<keyword id="KW-0472">Membrane</keyword>
<keyword id="KW-0517">Myogenesis</keyword>
<keyword id="KW-0524">Neurogenesis</keyword>
<keyword id="KW-0654">Proteoglycan</keyword>
<keyword id="KW-1185">Reference proteome</keyword>
<keyword id="KW-0732">Signal</keyword>
<keyword id="KW-0812">Transmembrane</keyword>
<keyword id="KW-1133">Transmembrane helix</keyword>